<comment type="function">
    <text evidence="1">Inhibits the chaperone activity of HSP70/HSC70 by promoting substrate release.</text>
</comment>
<comment type="subunit">
    <text evidence="1">Binds to the ATPase domain of HSP70/HSC chaperones.</text>
</comment>
<proteinExistence type="evidence at transcript level"/>
<sequence length="195" mass="22206">MSEKTSTVTIHYGNQRFPVAVNLNETLSELIDDLLETTEISEKKVKLFYAGKRLKDKKASLSKLGLKNHSKILCIRPHKQQRGSKEKDTVEPAPKAEAENPVFSRISGEIKAIDQYVDKELSPMYDNYVNKPSNDPKQKNKQKLMISELLLQQLLKLDGVDVLGSEKLRFERKQLVSKIQKMLDHVDQTSQEVAA</sequence>
<protein>
    <recommendedName>
        <fullName>BAG family molecular chaperone regulator 1A</fullName>
        <shortName>BAG-1A</shortName>
    </recommendedName>
</protein>
<organism>
    <name type="scientific">Schizosaccharomyces pombe (strain 972 / ATCC 24843)</name>
    <name type="common">Fission yeast</name>
    <dbReference type="NCBI Taxonomy" id="284812"/>
    <lineage>
        <taxon>Eukaryota</taxon>
        <taxon>Fungi</taxon>
        <taxon>Dikarya</taxon>
        <taxon>Ascomycota</taxon>
        <taxon>Taphrinomycotina</taxon>
        <taxon>Schizosaccharomycetes</taxon>
        <taxon>Schizosaccharomycetales</taxon>
        <taxon>Schizosaccharomycetaceae</taxon>
        <taxon>Schizosaccharomyces</taxon>
    </lineage>
</organism>
<feature type="chain" id="PRO_0000088879" description="BAG family molecular chaperone regulator 1A">
    <location>
        <begin position="1"/>
        <end position="195"/>
    </location>
</feature>
<feature type="domain" description="Ubiquitin-like" evidence="2">
    <location>
        <begin position="6"/>
        <end position="72"/>
    </location>
</feature>
<feature type="domain" description="BAG" evidence="3">
    <location>
        <begin position="109"/>
        <end position="190"/>
    </location>
</feature>
<feature type="region of interest" description="Disordered" evidence="4">
    <location>
        <begin position="78"/>
        <end position="98"/>
    </location>
</feature>
<feature type="compositionally biased region" description="Basic and acidic residues" evidence="4">
    <location>
        <begin position="83"/>
        <end position="98"/>
    </location>
</feature>
<keyword id="KW-0143">Chaperone</keyword>
<keyword id="KW-1185">Reference proteome</keyword>
<gene>
    <name type="primary">bag101</name>
    <name type="synonym">bag1</name>
    <name type="synonym">bag1-a</name>
    <name type="ORF">SPBC16G5.11c</name>
</gene>
<evidence type="ECO:0000250" key="1"/>
<evidence type="ECO:0000255" key="2">
    <source>
        <dbReference type="PROSITE-ProRule" id="PRU00214"/>
    </source>
</evidence>
<evidence type="ECO:0000255" key="3">
    <source>
        <dbReference type="PROSITE-ProRule" id="PRU00369"/>
    </source>
</evidence>
<evidence type="ECO:0000256" key="4">
    <source>
        <dbReference type="SAM" id="MobiDB-lite"/>
    </source>
</evidence>
<reference key="1">
    <citation type="journal article" date="1999" name="J. Biol. Chem.">
        <title>An evolutionarily conserved family of Hsp70/Hsc70 molecular chaperone regulators.</title>
        <authorList>
            <person name="Takayama S."/>
            <person name="Xie Z."/>
            <person name="Reed J.C."/>
        </authorList>
    </citation>
    <scope>NUCLEOTIDE SEQUENCE [MRNA]</scope>
</reference>
<reference key="2">
    <citation type="journal article" date="2002" name="Nature">
        <title>The genome sequence of Schizosaccharomyces pombe.</title>
        <authorList>
            <person name="Wood V."/>
            <person name="Gwilliam R."/>
            <person name="Rajandream M.A."/>
            <person name="Lyne M.H."/>
            <person name="Lyne R."/>
            <person name="Stewart A."/>
            <person name="Sgouros J.G."/>
            <person name="Peat N."/>
            <person name="Hayles J."/>
            <person name="Baker S.G."/>
            <person name="Basham D."/>
            <person name="Bowman S."/>
            <person name="Brooks K."/>
            <person name="Brown D."/>
            <person name="Brown S."/>
            <person name="Chillingworth T."/>
            <person name="Churcher C.M."/>
            <person name="Collins M."/>
            <person name="Connor R."/>
            <person name="Cronin A."/>
            <person name="Davis P."/>
            <person name="Feltwell T."/>
            <person name="Fraser A."/>
            <person name="Gentles S."/>
            <person name="Goble A."/>
            <person name="Hamlin N."/>
            <person name="Harris D.E."/>
            <person name="Hidalgo J."/>
            <person name="Hodgson G."/>
            <person name="Holroyd S."/>
            <person name="Hornsby T."/>
            <person name="Howarth S."/>
            <person name="Huckle E.J."/>
            <person name="Hunt S."/>
            <person name="Jagels K."/>
            <person name="James K.D."/>
            <person name="Jones L."/>
            <person name="Jones M."/>
            <person name="Leather S."/>
            <person name="McDonald S."/>
            <person name="McLean J."/>
            <person name="Mooney P."/>
            <person name="Moule S."/>
            <person name="Mungall K.L."/>
            <person name="Murphy L.D."/>
            <person name="Niblett D."/>
            <person name="Odell C."/>
            <person name="Oliver K."/>
            <person name="O'Neil S."/>
            <person name="Pearson D."/>
            <person name="Quail M.A."/>
            <person name="Rabbinowitsch E."/>
            <person name="Rutherford K.M."/>
            <person name="Rutter S."/>
            <person name="Saunders D."/>
            <person name="Seeger K."/>
            <person name="Sharp S."/>
            <person name="Skelton J."/>
            <person name="Simmonds M.N."/>
            <person name="Squares R."/>
            <person name="Squares S."/>
            <person name="Stevens K."/>
            <person name="Taylor K."/>
            <person name="Taylor R.G."/>
            <person name="Tivey A."/>
            <person name="Walsh S.V."/>
            <person name="Warren T."/>
            <person name="Whitehead S."/>
            <person name="Woodward J.R."/>
            <person name="Volckaert G."/>
            <person name="Aert R."/>
            <person name="Robben J."/>
            <person name="Grymonprez B."/>
            <person name="Weltjens I."/>
            <person name="Vanstreels E."/>
            <person name="Rieger M."/>
            <person name="Schaefer M."/>
            <person name="Mueller-Auer S."/>
            <person name="Gabel C."/>
            <person name="Fuchs M."/>
            <person name="Duesterhoeft A."/>
            <person name="Fritzc C."/>
            <person name="Holzer E."/>
            <person name="Moestl D."/>
            <person name="Hilbert H."/>
            <person name="Borzym K."/>
            <person name="Langer I."/>
            <person name="Beck A."/>
            <person name="Lehrach H."/>
            <person name="Reinhardt R."/>
            <person name="Pohl T.M."/>
            <person name="Eger P."/>
            <person name="Zimmermann W."/>
            <person name="Wedler H."/>
            <person name="Wambutt R."/>
            <person name="Purnelle B."/>
            <person name="Goffeau A."/>
            <person name="Cadieu E."/>
            <person name="Dreano S."/>
            <person name="Gloux S."/>
            <person name="Lelaure V."/>
            <person name="Mottier S."/>
            <person name="Galibert F."/>
            <person name="Aves S.J."/>
            <person name="Xiang Z."/>
            <person name="Hunt C."/>
            <person name="Moore K."/>
            <person name="Hurst S.M."/>
            <person name="Lucas M."/>
            <person name="Rochet M."/>
            <person name="Gaillardin C."/>
            <person name="Tallada V.A."/>
            <person name="Garzon A."/>
            <person name="Thode G."/>
            <person name="Daga R.R."/>
            <person name="Cruzado L."/>
            <person name="Jimenez J."/>
            <person name="Sanchez M."/>
            <person name="del Rey F."/>
            <person name="Benito J."/>
            <person name="Dominguez A."/>
            <person name="Revuelta J.L."/>
            <person name="Moreno S."/>
            <person name="Armstrong J."/>
            <person name="Forsburg S.L."/>
            <person name="Cerutti L."/>
            <person name="Lowe T."/>
            <person name="McCombie W.R."/>
            <person name="Paulsen I."/>
            <person name="Potashkin J."/>
            <person name="Shpakovski G.V."/>
            <person name="Ussery D."/>
            <person name="Barrell B.G."/>
            <person name="Nurse P."/>
        </authorList>
    </citation>
    <scope>NUCLEOTIDE SEQUENCE [LARGE SCALE GENOMIC DNA]</scope>
    <source>
        <strain>972 / ATCC 24843</strain>
    </source>
</reference>
<dbReference type="EMBL" id="CU329671">
    <property type="protein sequence ID" value="CAA19031.1"/>
    <property type="molecule type" value="Genomic_DNA"/>
</dbReference>
<dbReference type="EMBL" id="AF095789">
    <property type="protein sequence ID" value="AAD16126.1"/>
    <property type="molecule type" value="mRNA"/>
</dbReference>
<dbReference type="PIR" id="T39603">
    <property type="entry name" value="T39603"/>
</dbReference>
<dbReference type="RefSeq" id="NP_596760.1">
    <property type="nucleotide sequence ID" value="NM_001023780.2"/>
</dbReference>
<dbReference type="SMR" id="O60125"/>
<dbReference type="BioGRID" id="276391">
    <property type="interactions" value="23"/>
</dbReference>
<dbReference type="FunCoup" id="O60125">
    <property type="interactions" value="245"/>
</dbReference>
<dbReference type="STRING" id="284812.O60125"/>
<dbReference type="iPTMnet" id="O60125"/>
<dbReference type="PaxDb" id="4896-SPBC16G5.11c.1"/>
<dbReference type="EnsemblFungi" id="SPBC16G5.11c.1">
    <property type="protein sequence ID" value="SPBC16G5.11c.1:pep"/>
    <property type="gene ID" value="SPBC16G5.11c"/>
</dbReference>
<dbReference type="GeneID" id="2539843"/>
<dbReference type="KEGG" id="spo:2539843"/>
<dbReference type="PomBase" id="SPBC16G5.11c">
    <property type="gene designation" value="bag101"/>
</dbReference>
<dbReference type="VEuPathDB" id="FungiDB:SPBC16G5.11c"/>
<dbReference type="eggNOG" id="KOG4361">
    <property type="taxonomic scope" value="Eukaryota"/>
</dbReference>
<dbReference type="HOGENOM" id="CLU_1397083_0_0_1"/>
<dbReference type="InParanoid" id="O60125"/>
<dbReference type="OMA" id="HYGNQRI"/>
<dbReference type="PhylomeDB" id="O60125"/>
<dbReference type="Reactome" id="R-SPO-3371453">
    <property type="pathway name" value="Regulation of HSF1-mediated heat shock response"/>
</dbReference>
<dbReference type="PRO" id="PR:O60125"/>
<dbReference type="Proteomes" id="UP000002485">
    <property type="component" value="Chromosome II"/>
</dbReference>
<dbReference type="GO" id="GO:0005737">
    <property type="term" value="C:cytoplasm"/>
    <property type="evidence" value="ECO:0000314"/>
    <property type="project" value="PomBase"/>
</dbReference>
<dbReference type="GO" id="GO:0005829">
    <property type="term" value="C:cytosol"/>
    <property type="evidence" value="ECO:0000318"/>
    <property type="project" value="GO_Central"/>
</dbReference>
<dbReference type="GO" id="GO:0016020">
    <property type="term" value="C:membrane"/>
    <property type="evidence" value="ECO:0000318"/>
    <property type="project" value="GO_Central"/>
</dbReference>
<dbReference type="GO" id="GO:0005730">
    <property type="term" value="C:nucleolus"/>
    <property type="evidence" value="ECO:0007005"/>
    <property type="project" value="PomBase"/>
</dbReference>
<dbReference type="GO" id="GO:0005634">
    <property type="term" value="C:nucleus"/>
    <property type="evidence" value="ECO:0000314"/>
    <property type="project" value="PomBase"/>
</dbReference>
<dbReference type="GO" id="GO:0000774">
    <property type="term" value="F:adenyl-nucleotide exchange factor activity"/>
    <property type="evidence" value="ECO:0000318"/>
    <property type="project" value="GO_Central"/>
</dbReference>
<dbReference type="GO" id="GO:0051087">
    <property type="term" value="F:protein-folding chaperone binding"/>
    <property type="evidence" value="ECO:0000318"/>
    <property type="project" value="GO_Central"/>
</dbReference>
<dbReference type="GO" id="GO:0006457">
    <property type="term" value="P:protein folding"/>
    <property type="evidence" value="ECO:0000269"/>
    <property type="project" value="PomBase"/>
</dbReference>
<dbReference type="GO" id="GO:0050821">
    <property type="term" value="P:protein stabilization"/>
    <property type="evidence" value="ECO:0000318"/>
    <property type="project" value="GO_Central"/>
</dbReference>
<dbReference type="CDD" id="cd17039">
    <property type="entry name" value="Ubl_ubiquitin_like"/>
    <property type="match status" value="1"/>
</dbReference>
<dbReference type="FunFam" id="1.20.58.120:FF:000011">
    <property type="entry name" value="BAG family molecular chaperone regulator 1"/>
    <property type="match status" value="1"/>
</dbReference>
<dbReference type="FunFam" id="3.10.20.90:FF:000298">
    <property type="entry name" value="BAG family molecular chaperone regulator 1"/>
    <property type="match status" value="1"/>
</dbReference>
<dbReference type="Gene3D" id="1.20.58.120">
    <property type="entry name" value="BAG domain"/>
    <property type="match status" value="1"/>
</dbReference>
<dbReference type="Gene3D" id="3.10.20.90">
    <property type="entry name" value="Phosphatidylinositol 3-kinase Catalytic Subunit, Chain A, domain 1"/>
    <property type="match status" value="1"/>
</dbReference>
<dbReference type="InterPro" id="IPR039773">
    <property type="entry name" value="BAG_chaperone_regulator"/>
</dbReference>
<dbReference type="InterPro" id="IPR036533">
    <property type="entry name" value="BAG_dom_sf"/>
</dbReference>
<dbReference type="InterPro" id="IPR003103">
    <property type="entry name" value="BAG_domain"/>
</dbReference>
<dbReference type="InterPro" id="IPR000626">
    <property type="entry name" value="Ubiquitin-like_dom"/>
</dbReference>
<dbReference type="InterPro" id="IPR029071">
    <property type="entry name" value="Ubiquitin-like_domsf"/>
</dbReference>
<dbReference type="PANTHER" id="PTHR12329:SF16">
    <property type="entry name" value="BAG FAMILY MOLECULAR CHAPERONE REGULATOR 1"/>
    <property type="match status" value="1"/>
</dbReference>
<dbReference type="PANTHER" id="PTHR12329">
    <property type="entry name" value="BCL2-ASSOCIATED ATHANOGENE"/>
    <property type="match status" value="1"/>
</dbReference>
<dbReference type="Pfam" id="PF02179">
    <property type="entry name" value="BAG"/>
    <property type="match status" value="1"/>
</dbReference>
<dbReference type="Pfam" id="PF00240">
    <property type="entry name" value="ubiquitin"/>
    <property type="match status" value="1"/>
</dbReference>
<dbReference type="SMART" id="SM00264">
    <property type="entry name" value="BAG"/>
    <property type="match status" value="1"/>
</dbReference>
<dbReference type="SUPFAM" id="SSF63491">
    <property type="entry name" value="BAG domain"/>
    <property type="match status" value="1"/>
</dbReference>
<dbReference type="SUPFAM" id="SSF54236">
    <property type="entry name" value="Ubiquitin-like"/>
    <property type="match status" value="1"/>
</dbReference>
<dbReference type="PROSITE" id="PS51035">
    <property type="entry name" value="BAG"/>
    <property type="match status" value="1"/>
</dbReference>
<dbReference type="PROSITE" id="PS50053">
    <property type="entry name" value="UBIQUITIN_2"/>
    <property type="match status" value="1"/>
</dbReference>
<accession>O60125</accession>
<name>BAG1A_SCHPO</name>